<reference key="1">
    <citation type="journal article" date="2007" name="PLoS ONE">
        <title>Genome sequencing shows that European isolates of Francisella tularensis subspecies tularensis are almost identical to US laboratory strain Schu S4.</title>
        <authorList>
            <person name="Chaudhuri R.R."/>
            <person name="Ren C.-P."/>
            <person name="Desmond L."/>
            <person name="Vincent G.A."/>
            <person name="Silman N.J."/>
            <person name="Brehm J.K."/>
            <person name="Elmore M.J."/>
            <person name="Hudson M.J."/>
            <person name="Forsman M."/>
            <person name="Isherwood K.E."/>
            <person name="Gurycova D."/>
            <person name="Minton N.P."/>
            <person name="Titball R.W."/>
            <person name="Pallen M.J."/>
            <person name="Vipond R."/>
        </authorList>
    </citation>
    <scope>NUCLEOTIDE SEQUENCE [LARGE SCALE GENOMIC DNA]</scope>
    <source>
        <strain>FSC 198</strain>
    </source>
</reference>
<protein>
    <recommendedName>
        <fullName evidence="1">Biotin synthase</fullName>
        <ecNumber evidence="1">2.8.1.6</ecNumber>
    </recommendedName>
</protein>
<dbReference type="EC" id="2.8.1.6" evidence="1"/>
<dbReference type="EMBL" id="AM286280">
    <property type="protein sequence ID" value="CAL08953.1"/>
    <property type="molecule type" value="Genomic_DNA"/>
</dbReference>
<dbReference type="RefSeq" id="WP_003020978.1">
    <property type="nucleotide sequence ID" value="NC_008245.1"/>
</dbReference>
<dbReference type="SMR" id="Q14HR4"/>
<dbReference type="KEGG" id="ftf:FTF0937c"/>
<dbReference type="HOGENOM" id="CLU_033172_1_2_6"/>
<dbReference type="UniPathway" id="UPA00078">
    <property type="reaction ID" value="UER00162"/>
</dbReference>
<dbReference type="GO" id="GO:0051537">
    <property type="term" value="F:2 iron, 2 sulfur cluster binding"/>
    <property type="evidence" value="ECO:0007669"/>
    <property type="project" value="UniProtKB-KW"/>
</dbReference>
<dbReference type="GO" id="GO:0051539">
    <property type="term" value="F:4 iron, 4 sulfur cluster binding"/>
    <property type="evidence" value="ECO:0007669"/>
    <property type="project" value="UniProtKB-KW"/>
</dbReference>
<dbReference type="GO" id="GO:0004076">
    <property type="term" value="F:biotin synthase activity"/>
    <property type="evidence" value="ECO:0007669"/>
    <property type="project" value="UniProtKB-UniRule"/>
</dbReference>
<dbReference type="GO" id="GO:0005506">
    <property type="term" value="F:iron ion binding"/>
    <property type="evidence" value="ECO:0007669"/>
    <property type="project" value="UniProtKB-UniRule"/>
</dbReference>
<dbReference type="GO" id="GO:0009102">
    <property type="term" value="P:biotin biosynthetic process"/>
    <property type="evidence" value="ECO:0007669"/>
    <property type="project" value="UniProtKB-UniRule"/>
</dbReference>
<dbReference type="CDD" id="cd01335">
    <property type="entry name" value="Radical_SAM"/>
    <property type="match status" value="1"/>
</dbReference>
<dbReference type="Gene3D" id="3.20.20.70">
    <property type="entry name" value="Aldolase class I"/>
    <property type="match status" value="1"/>
</dbReference>
<dbReference type="HAMAP" id="MF_01694">
    <property type="entry name" value="BioB"/>
    <property type="match status" value="1"/>
</dbReference>
<dbReference type="InterPro" id="IPR013785">
    <property type="entry name" value="Aldolase_TIM"/>
</dbReference>
<dbReference type="InterPro" id="IPR010722">
    <property type="entry name" value="BATS_dom"/>
</dbReference>
<dbReference type="InterPro" id="IPR002684">
    <property type="entry name" value="Biotin_synth/BioAB"/>
</dbReference>
<dbReference type="InterPro" id="IPR024177">
    <property type="entry name" value="Biotin_synthase"/>
</dbReference>
<dbReference type="InterPro" id="IPR006638">
    <property type="entry name" value="Elp3/MiaA/NifB-like_rSAM"/>
</dbReference>
<dbReference type="InterPro" id="IPR007197">
    <property type="entry name" value="rSAM"/>
</dbReference>
<dbReference type="NCBIfam" id="TIGR00433">
    <property type="entry name" value="bioB"/>
    <property type="match status" value="1"/>
</dbReference>
<dbReference type="PANTHER" id="PTHR22976">
    <property type="entry name" value="BIOTIN SYNTHASE"/>
    <property type="match status" value="1"/>
</dbReference>
<dbReference type="PANTHER" id="PTHR22976:SF2">
    <property type="entry name" value="BIOTIN SYNTHASE, MITOCHONDRIAL"/>
    <property type="match status" value="1"/>
</dbReference>
<dbReference type="Pfam" id="PF06968">
    <property type="entry name" value="BATS"/>
    <property type="match status" value="1"/>
</dbReference>
<dbReference type="Pfam" id="PF04055">
    <property type="entry name" value="Radical_SAM"/>
    <property type="match status" value="1"/>
</dbReference>
<dbReference type="PIRSF" id="PIRSF001619">
    <property type="entry name" value="Biotin_synth"/>
    <property type="match status" value="1"/>
</dbReference>
<dbReference type="SFLD" id="SFLDG01060">
    <property type="entry name" value="BATS_domain_containing"/>
    <property type="match status" value="1"/>
</dbReference>
<dbReference type="SFLD" id="SFLDF00272">
    <property type="entry name" value="biotin_synthase"/>
    <property type="match status" value="1"/>
</dbReference>
<dbReference type="SMART" id="SM00876">
    <property type="entry name" value="BATS"/>
    <property type="match status" value="1"/>
</dbReference>
<dbReference type="SMART" id="SM00729">
    <property type="entry name" value="Elp3"/>
    <property type="match status" value="1"/>
</dbReference>
<dbReference type="SUPFAM" id="SSF102114">
    <property type="entry name" value="Radical SAM enzymes"/>
    <property type="match status" value="1"/>
</dbReference>
<dbReference type="PROSITE" id="PS51918">
    <property type="entry name" value="RADICAL_SAM"/>
    <property type="match status" value="1"/>
</dbReference>
<organism>
    <name type="scientific">Francisella tularensis subsp. tularensis (strain FSC 198)</name>
    <dbReference type="NCBI Taxonomy" id="393115"/>
    <lineage>
        <taxon>Bacteria</taxon>
        <taxon>Pseudomonadati</taxon>
        <taxon>Pseudomonadota</taxon>
        <taxon>Gammaproteobacteria</taxon>
        <taxon>Thiotrichales</taxon>
        <taxon>Francisellaceae</taxon>
        <taxon>Francisella</taxon>
    </lineage>
</organism>
<comment type="function">
    <text evidence="1">Catalyzes the conversion of dethiobiotin (DTB) to biotin by the insertion of a sulfur atom into dethiobiotin via a radical-based mechanism.</text>
</comment>
<comment type="catalytic activity">
    <reaction evidence="1">
        <text>(4R,5S)-dethiobiotin + (sulfur carrier)-SH + 2 reduced [2Fe-2S]-[ferredoxin] + 2 S-adenosyl-L-methionine = (sulfur carrier)-H + biotin + 2 5'-deoxyadenosine + 2 L-methionine + 2 oxidized [2Fe-2S]-[ferredoxin]</text>
        <dbReference type="Rhea" id="RHEA:22060"/>
        <dbReference type="Rhea" id="RHEA-COMP:10000"/>
        <dbReference type="Rhea" id="RHEA-COMP:10001"/>
        <dbReference type="Rhea" id="RHEA-COMP:14737"/>
        <dbReference type="Rhea" id="RHEA-COMP:14739"/>
        <dbReference type="ChEBI" id="CHEBI:17319"/>
        <dbReference type="ChEBI" id="CHEBI:29917"/>
        <dbReference type="ChEBI" id="CHEBI:33737"/>
        <dbReference type="ChEBI" id="CHEBI:33738"/>
        <dbReference type="ChEBI" id="CHEBI:57586"/>
        <dbReference type="ChEBI" id="CHEBI:57844"/>
        <dbReference type="ChEBI" id="CHEBI:59789"/>
        <dbReference type="ChEBI" id="CHEBI:64428"/>
        <dbReference type="ChEBI" id="CHEBI:149473"/>
        <dbReference type="EC" id="2.8.1.6"/>
    </reaction>
</comment>
<comment type="cofactor">
    <cofactor evidence="1">
        <name>[4Fe-4S] cluster</name>
        <dbReference type="ChEBI" id="CHEBI:49883"/>
    </cofactor>
    <text evidence="1">Binds 1 [4Fe-4S] cluster. The cluster is coordinated with 3 cysteines and an exchangeable S-adenosyl-L-methionine.</text>
</comment>
<comment type="cofactor">
    <cofactor evidence="1">
        <name>[2Fe-2S] cluster</name>
        <dbReference type="ChEBI" id="CHEBI:190135"/>
    </cofactor>
    <text evidence="1">Binds 1 [2Fe-2S] cluster. The cluster is coordinated with 3 cysteines and 1 arginine.</text>
</comment>
<comment type="pathway">
    <text evidence="1">Cofactor biosynthesis; biotin biosynthesis; biotin from 7,8-diaminononanoate: step 2/2.</text>
</comment>
<comment type="subunit">
    <text evidence="1">Homodimer.</text>
</comment>
<comment type="similarity">
    <text evidence="1">Belongs to the radical SAM superfamily. Biotin synthase family.</text>
</comment>
<proteinExistence type="inferred from homology"/>
<name>BIOB_FRAT1</name>
<feature type="chain" id="PRO_0000381391" description="Biotin synthase">
    <location>
        <begin position="1"/>
        <end position="313"/>
    </location>
</feature>
<feature type="domain" description="Radical SAM core" evidence="2">
    <location>
        <begin position="28"/>
        <end position="258"/>
    </location>
</feature>
<feature type="binding site" evidence="1">
    <location>
        <position position="46"/>
    </location>
    <ligand>
        <name>[4Fe-4S] cluster</name>
        <dbReference type="ChEBI" id="CHEBI:49883"/>
        <note>4Fe-4S-S-AdoMet</note>
    </ligand>
</feature>
<feature type="binding site" evidence="1">
    <location>
        <position position="50"/>
    </location>
    <ligand>
        <name>[4Fe-4S] cluster</name>
        <dbReference type="ChEBI" id="CHEBI:49883"/>
        <note>4Fe-4S-S-AdoMet</note>
    </ligand>
</feature>
<feature type="binding site" evidence="1">
    <location>
        <position position="53"/>
    </location>
    <ligand>
        <name>[4Fe-4S] cluster</name>
        <dbReference type="ChEBI" id="CHEBI:49883"/>
        <note>4Fe-4S-S-AdoMet</note>
    </ligand>
</feature>
<feature type="binding site" evidence="1">
    <location>
        <position position="90"/>
    </location>
    <ligand>
        <name>[2Fe-2S] cluster</name>
        <dbReference type="ChEBI" id="CHEBI:190135"/>
    </ligand>
</feature>
<feature type="binding site" evidence="1">
    <location>
        <position position="121"/>
    </location>
    <ligand>
        <name>[2Fe-2S] cluster</name>
        <dbReference type="ChEBI" id="CHEBI:190135"/>
    </ligand>
</feature>
<feature type="binding site" evidence="1">
    <location>
        <position position="181"/>
    </location>
    <ligand>
        <name>[2Fe-2S] cluster</name>
        <dbReference type="ChEBI" id="CHEBI:190135"/>
    </ligand>
</feature>
<feature type="binding site" evidence="1">
    <location>
        <position position="256"/>
    </location>
    <ligand>
        <name>[2Fe-2S] cluster</name>
        <dbReference type="ChEBI" id="CHEBI:190135"/>
    </ligand>
</feature>
<evidence type="ECO:0000255" key="1">
    <source>
        <dbReference type="HAMAP-Rule" id="MF_01694"/>
    </source>
</evidence>
<evidence type="ECO:0000255" key="2">
    <source>
        <dbReference type="PROSITE-ProRule" id="PRU01266"/>
    </source>
</evidence>
<accession>Q14HR4</accession>
<sequence length="313" mass="34895">MTLQQIKEIYSRPLTELILQALEIHNKNFGNDIELCSLKSIKTGTCPEDCKYCPQSGHYNTSIEKHKLLDKDSILAEAKNAKDAGSKRFCMGAAWKHIPKKDFDQVAEIITEVKNLGLETCVTLGSINADEATKLKQAGLDYYNHNLDTSREFYPEIITTRKFEERIETIRNVANADINVCCGGILGMGESLDDRFNLLLELLQLPAAPKSIPINTLIPIKGTPLGDKYTNAQIDSFELVRFIATTRILFPQARLRLSAGRENMSLETQTLCFLAGINSIFYGNKLLTENNATVNSDNFLLAKLGLKSNAELC</sequence>
<keyword id="KW-0001">2Fe-2S</keyword>
<keyword id="KW-0004">4Fe-4S</keyword>
<keyword id="KW-0093">Biotin biosynthesis</keyword>
<keyword id="KW-0408">Iron</keyword>
<keyword id="KW-0411">Iron-sulfur</keyword>
<keyword id="KW-0479">Metal-binding</keyword>
<keyword id="KW-0949">S-adenosyl-L-methionine</keyword>
<keyword id="KW-0808">Transferase</keyword>
<gene>
    <name evidence="1" type="primary">bioB</name>
    <name type="ordered locus">FTF0937c</name>
</gene>